<protein>
    <recommendedName>
        <fullName evidence="1">Small ribosomal subunit protein uS10</fullName>
    </recommendedName>
    <alternativeName>
        <fullName evidence="2">30S ribosomal protein S10</fullName>
    </alternativeName>
</protein>
<proteinExistence type="inferred from homology"/>
<evidence type="ECO:0000255" key="1">
    <source>
        <dbReference type="HAMAP-Rule" id="MF_00508"/>
    </source>
</evidence>
<evidence type="ECO:0000305" key="2"/>
<name>RS10_DICNV</name>
<sequence length="104" mass="11763">MASTQKIRIRLKSYDHRLIDASAKQIVETAKRAGAQVKGPIPLPVKKEIYTVLISPHVNKDARDQYEMRTHKRIMDIIDPTDKTVDALMKLDLAAGVDVKIELQ</sequence>
<keyword id="KW-1185">Reference proteome</keyword>
<keyword id="KW-0687">Ribonucleoprotein</keyword>
<keyword id="KW-0689">Ribosomal protein</keyword>
<accession>A5EX83</accession>
<gene>
    <name evidence="1" type="primary">rpsJ</name>
    <name type="ordered locus">DNO_1276</name>
</gene>
<feature type="chain" id="PRO_1000127115" description="Small ribosomal subunit protein uS10">
    <location>
        <begin position="1"/>
        <end position="104"/>
    </location>
</feature>
<dbReference type="EMBL" id="CP000513">
    <property type="protein sequence ID" value="ABQ14116.1"/>
    <property type="molecule type" value="Genomic_DNA"/>
</dbReference>
<dbReference type="RefSeq" id="WP_012031571.1">
    <property type="nucleotide sequence ID" value="NC_009446.1"/>
</dbReference>
<dbReference type="SMR" id="A5EX83"/>
<dbReference type="STRING" id="246195.DNO_1276"/>
<dbReference type="KEGG" id="dno:DNO_1276"/>
<dbReference type="eggNOG" id="COG0051">
    <property type="taxonomic scope" value="Bacteria"/>
</dbReference>
<dbReference type="HOGENOM" id="CLU_122625_1_3_6"/>
<dbReference type="OrthoDB" id="9804464at2"/>
<dbReference type="Proteomes" id="UP000000248">
    <property type="component" value="Chromosome"/>
</dbReference>
<dbReference type="GO" id="GO:1990904">
    <property type="term" value="C:ribonucleoprotein complex"/>
    <property type="evidence" value="ECO:0007669"/>
    <property type="project" value="UniProtKB-KW"/>
</dbReference>
<dbReference type="GO" id="GO:0005840">
    <property type="term" value="C:ribosome"/>
    <property type="evidence" value="ECO:0007669"/>
    <property type="project" value="UniProtKB-KW"/>
</dbReference>
<dbReference type="GO" id="GO:0003735">
    <property type="term" value="F:structural constituent of ribosome"/>
    <property type="evidence" value="ECO:0007669"/>
    <property type="project" value="InterPro"/>
</dbReference>
<dbReference type="GO" id="GO:0000049">
    <property type="term" value="F:tRNA binding"/>
    <property type="evidence" value="ECO:0007669"/>
    <property type="project" value="UniProtKB-UniRule"/>
</dbReference>
<dbReference type="GO" id="GO:0006412">
    <property type="term" value="P:translation"/>
    <property type="evidence" value="ECO:0007669"/>
    <property type="project" value="UniProtKB-UniRule"/>
</dbReference>
<dbReference type="FunFam" id="3.30.70.600:FF:000001">
    <property type="entry name" value="30S ribosomal protein S10"/>
    <property type="match status" value="1"/>
</dbReference>
<dbReference type="Gene3D" id="3.30.70.600">
    <property type="entry name" value="Ribosomal protein S10 domain"/>
    <property type="match status" value="1"/>
</dbReference>
<dbReference type="HAMAP" id="MF_00508">
    <property type="entry name" value="Ribosomal_uS10"/>
    <property type="match status" value="1"/>
</dbReference>
<dbReference type="InterPro" id="IPR001848">
    <property type="entry name" value="Ribosomal_uS10"/>
</dbReference>
<dbReference type="InterPro" id="IPR027486">
    <property type="entry name" value="Ribosomal_uS10_dom"/>
</dbReference>
<dbReference type="InterPro" id="IPR036838">
    <property type="entry name" value="Ribosomal_uS10_dom_sf"/>
</dbReference>
<dbReference type="NCBIfam" id="NF001861">
    <property type="entry name" value="PRK00596.1"/>
    <property type="match status" value="1"/>
</dbReference>
<dbReference type="NCBIfam" id="TIGR01049">
    <property type="entry name" value="rpsJ_bact"/>
    <property type="match status" value="1"/>
</dbReference>
<dbReference type="PANTHER" id="PTHR11700">
    <property type="entry name" value="30S RIBOSOMAL PROTEIN S10 FAMILY MEMBER"/>
    <property type="match status" value="1"/>
</dbReference>
<dbReference type="Pfam" id="PF00338">
    <property type="entry name" value="Ribosomal_S10"/>
    <property type="match status" value="1"/>
</dbReference>
<dbReference type="PRINTS" id="PR00971">
    <property type="entry name" value="RIBOSOMALS10"/>
</dbReference>
<dbReference type="SMART" id="SM01403">
    <property type="entry name" value="Ribosomal_S10"/>
    <property type="match status" value="1"/>
</dbReference>
<dbReference type="SUPFAM" id="SSF54999">
    <property type="entry name" value="Ribosomal protein S10"/>
    <property type="match status" value="1"/>
</dbReference>
<reference key="1">
    <citation type="journal article" date="2007" name="Nat. Biotechnol.">
        <title>Genome sequence and identification of candidate vaccine antigens from the animal pathogen Dichelobacter nodosus.</title>
        <authorList>
            <person name="Myers G.S.A."/>
            <person name="Parker D."/>
            <person name="Al-Hasani K."/>
            <person name="Kennan R.M."/>
            <person name="Seemann T."/>
            <person name="Ren Q."/>
            <person name="Badger J.H."/>
            <person name="Selengut J.D."/>
            <person name="Deboy R.T."/>
            <person name="Tettelin H."/>
            <person name="Boyce J.D."/>
            <person name="McCarl V.P."/>
            <person name="Han X."/>
            <person name="Nelson W.C."/>
            <person name="Madupu R."/>
            <person name="Mohamoud Y."/>
            <person name="Holley T."/>
            <person name="Fedorova N."/>
            <person name="Khouri H."/>
            <person name="Bottomley S.P."/>
            <person name="Whittington R.J."/>
            <person name="Adler B."/>
            <person name="Songer J.G."/>
            <person name="Rood J.I."/>
            <person name="Paulsen I.T."/>
        </authorList>
    </citation>
    <scope>NUCLEOTIDE SEQUENCE [LARGE SCALE GENOMIC DNA]</scope>
    <source>
        <strain>VCS1703A</strain>
    </source>
</reference>
<comment type="function">
    <text evidence="1">Involved in the binding of tRNA to the ribosomes.</text>
</comment>
<comment type="subunit">
    <text evidence="1">Part of the 30S ribosomal subunit.</text>
</comment>
<comment type="similarity">
    <text evidence="1">Belongs to the universal ribosomal protein uS10 family.</text>
</comment>
<organism>
    <name type="scientific">Dichelobacter nodosus (strain VCS1703A)</name>
    <dbReference type="NCBI Taxonomy" id="246195"/>
    <lineage>
        <taxon>Bacteria</taxon>
        <taxon>Pseudomonadati</taxon>
        <taxon>Pseudomonadota</taxon>
        <taxon>Gammaproteobacteria</taxon>
        <taxon>Cardiobacteriales</taxon>
        <taxon>Cardiobacteriaceae</taxon>
        <taxon>Dichelobacter</taxon>
    </lineage>
</organism>